<gene>
    <name evidence="1" type="primary">cmk</name>
    <name type="ordered locus">USA300HOU_1415</name>
</gene>
<reference key="1">
    <citation type="journal article" date="2007" name="BMC Microbiol.">
        <title>Subtle genetic changes enhance virulence of methicillin resistant and sensitive Staphylococcus aureus.</title>
        <authorList>
            <person name="Highlander S.K."/>
            <person name="Hulten K.G."/>
            <person name="Qin X."/>
            <person name="Jiang H."/>
            <person name="Yerrapragada S."/>
            <person name="Mason E.O. Jr."/>
            <person name="Shang Y."/>
            <person name="Williams T.M."/>
            <person name="Fortunov R.M."/>
            <person name="Liu Y."/>
            <person name="Igboeli O."/>
            <person name="Petrosino J."/>
            <person name="Tirumalai M."/>
            <person name="Uzman A."/>
            <person name="Fox G.E."/>
            <person name="Cardenas A.M."/>
            <person name="Muzny D.M."/>
            <person name="Hemphill L."/>
            <person name="Ding Y."/>
            <person name="Dugan S."/>
            <person name="Blyth P.R."/>
            <person name="Buhay C.J."/>
            <person name="Dinh H.H."/>
            <person name="Hawes A.C."/>
            <person name="Holder M."/>
            <person name="Kovar C.L."/>
            <person name="Lee S.L."/>
            <person name="Liu W."/>
            <person name="Nazareth L.V."/>
            <person name="Wang Q."/>
            <person name="Zhou J."/>
            <person name="Kaplan S.L."/>
            <person name="Weinstock G.M."/>
        </authorList>
    </citation>
    <scope>NUCLEOTIDE SEQUENCE [LARGE SCALE GENOMIC DNA]</scope>
    <source>
        <strain>USA300 / TCH1516</strain>
    </source>
</reference>
<comment type="catalytic activity">
    <reaction evidence="1">
        <text>CMP + ATP = CDP + ADP</text>
        <dbReference type="Rhea" id="RHEA:11600"/>
        <dbReference type="ChEBI" id="CHEBI:30616"/>
        <dbReference type="ChEBI" id="CHEBI:58069"/>
        <dbReference type="ChEBI" id="CHEBI:60377"/>
        <dbReference type="ChEBI" id="CHEBI:456216"/>
        <dbReference type="EC" id="2.7.4.25"/>
    </reaction>
</comment>
<comment type="catalytic activity">
    <reaction evidence="1">
        <text>dCMP + ATP = dCDP + ADP</text>
        <dbReference type="Rhea" id="RHEA:25094"/>
        <dbReference type="ChEBI" id="CHEBI:30616"/>
        <dbReference type="ChEBI" id="CHEBI:57566"/>
        <dbReference type="ChEBI" id="CHEBI:58593"/>
        <dbReference type="ChEBI" id="CHEBI:456216"/>
        <dbReference type="EC" id="2.7.4.25"/>
    </reaction>
</comment>
<comment type="subcellular location">
    <subcellularLocation>
        <location evidence="1">Cytoplasm</location>
    </subcellularLocation>
</comment>
<comment type="similarity">
    <text evidence="1">Belongs to the cytidylate kinase family. Type 1 subfamily.</text>
</comment>
<organism>
    <name type="scientific">Staphylococcus aureus (strain USA300 / TCH1516)</name>
    <dbReference type="NCBI Taxonomy" id="451516"/>
    <lineage>
        <taxon>Bacteria</taxon>
        <taxon>Bacillati</taxon>
        <taxon>Bacillota</taxon>
        <taxon>Bacilli</taxon>
        <taxon>Bacillales</taxon>
        <taxon>Staphylococcaceae</taxon>
        <taxon>Staphylococcus</taxon>
    </lineage>
</organism>
<accession>A8Z457</accession>
<sequence>MKAINIALDGPAAAGKSTIAKRVASELSMIYVDTGAMYRALTYKYLKLNKTEDFAKLVDQTTLDLTYKADKGQCVILDNEDVTDFLRNNDVTQHVSYVASKEPVRSFAVKKQKELAAEKGIVMDGRDIGTVVLPDADLKVYMIASVEERAERRYKDNQLRGIESNFEDLKRDIEARDQYDMNREISPLRKADDAVTLDTTGKSIEEVTDEILAMVSQIK</sequence>
<keyword id="KW-0067">ATP-binding</keyword>
<keyword id="KW-0963">Cytoplasm</keyword>
<keyword id="KW-0418">Kinase</keyword>
<keyword id="KW-0547">Nucleotide-binding</keyword>
<keyword id="KW-0808">Transferase</keyword>
<protein>
    <recommendedName>
        <fullName evidence="1">Cytidylate kinase</fullName>
        <shortName evidence="1">CK</shortName>
        <ecNumber evidence="1">2.7.4.25</ecNumber>
    </recommendedName>
    <alternativeName>
        <fullName evidence="1">Cytidine monophosphate kinase</fullName>
        <shortName evidence="1">CMP kinase</shortName>
    </alternativeName>
</protein>
<proteinExistence type="inferred from homology"/>
<name>KCY_STAAT</name>
<feature type="chain" id="PRO_1000078355" description="Cytidylate kinase">
    <location>
        <begin position="1"/>
        <end position="219"/>
    </location>
</feature>
<feature type="binding site" evidence="1">
    <location>
        <begin position="10"/>
        <end position="18"/>
    </location>
    <ligand>
        <name>ATP</name>
        <dbReference type="ChEBI" id="CHEBI:30616"/>
    </ligand>
</feature>
<dbReference type="EC" id="2.7.4.25" evidence="1"/>
<dbReference type="EMBL" id="CP000730">
    <property type="protein sequence ID" value="ABX29425.1"/>
    <property type="molecule type" value="Genomic_DNA"/>
</dbReference>
<dbReference type="RefSeq" id="WP_000644391.1">
    <property type="nucleotide sequence ID" value="NC_010079.1"/>
</dbReference>
<dbReference type="SMR" id="A8Z457"/>
<dbReference type="KEGG" id="sax:USA300HOU_1415"/>
<dbReference type="HOGENOM" id="CLU_079959_0_2_9"/>
<dbReference type="GO" id="GO:0005829">
    <property type="term" value="C:cytosol"/>
    <property type="evidence" value="ECO:0007669"/>
    <property type="project" value="TreeGrafter"/>
</dbReference>
<dbReference type="GO" id="GO:0005524">
    <property type="term" value="F:ATP binding"/>
    <property type="evidence" value="ECO:0007669"/>
    <property type="project" value="UniProtKB-UniRule"/>
</dbReference>
<dbReference type="GO" id="GO:0036430">
    <property type="term" value="F:CMP kinase activity"/>
    <property type="evidence" value="ECO:0007669"/>
    <property type="project" value="RHEA"/>
</dbReference>
<dbReference type="GO" id="GO:0036431">
    <property type="term" value="F:dCMP kinase activity"/>
    <property type="evidence" value="ECO:0007669"/>
    <property type="project" value="RHEA"/>
</dbReference>
<dbReference type="GO" id="GO:0015949">
    <property type="term" value="P:nucleobase-containing small molecule interconversion"/>
    <property type="evidence" value="ECO:0007669"/>
    <property type="project" value="TreeGrafter"/>
</dbReference>
<dbReference type="GO" id="GO:0006220">
    <property type="term" value="P:pyrimidine nucleotide metabolic process"/>
    <property type="evidence" value="ECO:0007669"/>
    <property type="project" value="UniProtKB-UniRule"/>
</dbReference>
<dbReference type="CDD" id="cd02020">
    <property type="entry name" value="CMPK"/>
    <property type="match status" value="1"/>
</dbReference>
<dbReference type="Gene3D" id="3.40.50.300">
    <property type="entry name" value="P-loop containing nucleotide triphosphate hydrolases"/>
    <property type="match status" value="1"/>
</dbReference>
<dbReference type="HAMAP" id="MF_00238">
    <property type="entry name" value="Cytidyl_kinase_type1"/>
    <property type="match status" value="1"/>
</dbReference>
<dbReference type="InterPro" id="IPR003136">
    <property type="entry name" value="Cytidylate_kin"/>
</dbReference>
<dbReference type="InterPro" id="IPR011994">
    <property type="entry name" value="Cytidylate_kinase_dom"/>
</dbReference>
<dbReference type="InterPro" id="IPR027417">
    <property type="entry name" value="P-loop_NTPase"/>
</dbReference>
<dbReference type="NCBIfam" id="TIGR00017">
    <property type="entry name" value="cmk"/>
    <property type="match status" value="1"/>
</dbReference>
<dbReference type="PANTHER" id="PTHR21299:SF2">
    <property type="entry name" value="CYTIDYLATE KINASE"/>
    <property type="match status" value="1"/>
</dbReference>
<dbReference type="PANTHER" id="PTHR21299">
    <property type="entry name" value="CYTIDYLATE KINASE/PANTOATE-BETA-ALANINE LIGASE"/>
    <property type="match status" value="1"/>
</dbReference>
<dbReference type="Pfam" id="PF02224">
    <property type="entry name" value="Cytidylate_kin"/>
    <property type="match status" value="1"/>
</dbReference>
<dbReference type="SUPFAM" id="SSF52540">
    <property type="entry name" value="P-loop containing nucleoside triphosphate hydrolases"/>
    <property type="match status" value="1"/>
</dbReference>
<evidence type="ECO:0000255" key="1">
    <source>
        <dbReference type="HAMAP-Rule" id="MF_00238"/>
    </source>
</evidence>